<proteinExistence type="inferred from homology"/>
<accession>Q4FNM6</accession>
<feature type="chain" id="PRO_0000329751" description="Polyribonucleotide nucleotidyltransferase">
    <location>
        <begin position="1"/>
        <end position="690"/>
    </location>
</feature>
<feature type="domain" description="KH" evidence="1">
    <location>
        <begin position="550"/>
        <end position="609"/>
    </location>
</feature>
<feature type="domain" description="S1 motif" evidence="1">
    <location>
        <begin position="619"/>
        <end position="686"/>
    </location>
</feature>
<feature type="binding site" evidence="1">
    <location>
        <position position="483"/>
    </location>
    <ligand>
        <name>Mg(2+)</name>
        <dbReference type="ChEBI" id="CHEBI:18420"/>
    </ligand>
</feature>
<feature type="binding site" evidence="1">
    <location>
        <position position="489"/>
    </location>
    <ligand>
        <name>Mg(2+)</name>
        <dbReference type="ChEBI" id="CHEBI:18420"/>
    </ligand>
</feature>
<protein>
    <recommendedName>
        <fullName evidence="1">Polyribonucleotide nucleotidyltransferase</fullName>
        <ecNumber evidence="1">2.7.7.8</ecNumber>
    </recommendedName>
    <alternativeName>
        <fullName evidence="1">Polynucleotide phosphorylase</fullName>
        <shortName evidence="1">PNPase</shortName>
    </alternativeName>
</protein>
<evidence type="ECO:0000255" key="1">
    <source>
        <dbReference type="HAMAP-Rule" id="MF_01595"/>
    </source>
</evidence>
<keyword id="KW-0963">Cytoplasm</keyword>
<keyword id="KW-0460">Magnesium</keyword>
<keyword id="KW-0479">Metal-binding</keyword>
<keyword id="KW-0548">Nucleotidyltransferase</keyword>
<keyword id="KW-1185">Reference proteome</keyword>
<keyword id="KW-0694">RNA-binding</keyword>
<keyword id="KW-0808">Transferase</keyword>
<gene>
    <name evidence="1" type="primary">pnp</name>
    <name type="ordered locus">SAR11_0392</name>
</gene>
<reference key="1">
    <citation type="journal article" date="2005" name="Science">
        <title>Genome streamlining in a cosmopolitan oceanic bacterium.</title>
        <authorList>
            <person name="Giovannoni S.J."/>
            <person name="Tripp H.J."/>
            <person name="Givan S."/>
            <person name="Podar M."/>
            <person name="Vergin K.L."/>
            <person name="Baptista D."/>
            <person name="Bibbs L."/>
            <person name="Eads J."/>
            <person name="Richardson T.H."/>
            <person name="Noordewier M."/>
            <person name="Rappe M.S."/>
            <person name="Short J.M."/>
            <person name="Carrington J.C."/>
            <person name="Mathur E.J."/>
        </authorList>
    </citation>
    <scope>NUCLEOTIDE SEQUENCE [LARGE SCALE GENOMIC DNA]</scope>
    <source>
        <strain>HTCC1062</strain>
    </source>
</reference>
<dbReference type="EC" id="2.7.7.8" evidence="1"/>
<dbReference type="EMBL" id="CP000084">
    <property type="protein sequence ID" value="AAZ21213.1"/>
    <property type="molecule type" value="Genomic_DNA"/>
</dbReference>
<dbReference type="RefSeq" id="WP_011281676.1">
    <property type="nucleotide sequence ID" value="NC_007205.1"/>
</dbReference>
<dbReference type="SMR" id="Q4FNM6"/>
<dbReference type="STRING" id="335992.SAR11_0392"/>
<dbReference type="GeneID" id="66294889"/>
<dbReference type="KEGG" id="pub:SAR11_0392"/>
<dbReference type="eggNOG" id="COG1185">
    <property type="taxonomic scope" value="Bacteria"/>
</dbReference>
<dbReference type="HOGENOM" id="CLU_004217_2_2_5"/>
<dbReference type="OrthoDB" id="9804305at2"/>
<dbReference type="Proteomes" id="UP000002528">
    <property type="component" value="Chromosome"/>
</dbReference>
<dbReference type="GO" id="GO:0005829">
    <property type="term" value="C:cytosol"/>
    <property type="evidence" value="ECO:0007669"/>
    <property type="project" value="TreeGrafter"/>
</dbReference>
<dbReference type="GO" id="GO:0000175">
    <property type="term" value="F:3'-5'-RNA exonuclease activity"/>
    <property type="evidence" value="ECO:0007669"/>
    <property type="project" value="TreeGrafter"/>
</dbReference>
<dbReference type="GO" id="GO:0000287">
    <property type="term" value="F:magnesium ion binding"/>
    <property type="evidence" value="ECO:0007669"/>
    <property type="project" value="UniProtKB-UniRule"/>
</dbReference>
<dbReference type="GO" id="GO:0004654">
    <property type="term" value="F:polyribonucleotide nucleotidyltransferase activity"/>
    <property type="evidence" value="ECO:0007669"/>
    <property type="project" value="UniProtKB-UniRule"/>
</dbReference>
<dbReference type="GO" id="GO:0003723">
    <property type="term" value="F:RNA binding"/>
    <property type="evidence" value="ECO:0007669"/>
    <property type="project" value="UniProtKB-UniRule"/>
</dbReference>
<dbReference type="GO" id="GO:0006402">
    <property type="term" value="P:mRNA catabolic process"/>
    <property type="evidence" value="ECO:0007669"/>
    <property type="project" value="UniProtKB-UniRule"/>
</dbReference>
<dbReference type="GO" id="GO:0006396">
    <property type="term" value="P:RNA processing"/>
    <property type="evidence" value="ECO:0007669"/>
    <property type="project" value="InterPro"/>
</dbReference>
<dbReference type="CDD" id="cd02393">
    <property type="entry name" value="KH-I_PNPase"/>
    <property type="match status" value="1"/>
</dbReference>
<dbReference type="CDD" id="cd11363">
    <property type="entry name" value="RNase_PH_PNPase_1"/>
    <property type="match status" value="1"/>
</dbReference>
<dbReference type="CDD" id="cd11364">
    <property type="entry name" value="RNase_PH_PNPase_2"/>
    <property type="match status" value="1"/>
</dbReference>
<dbReference type="CDD" id="cd04472">
    <property type="entry name" value="S1_PNPase"/>
    <property type="match status" value="1"/>
</dbReference>
<dbReference type="FunFam" id="2.40.50.140:FF:000107">
    <property type="entry name" value="Polyribonucleotide nucleotidyltransferase"/>
    <property type="match status" value="1"/>
</dbReference>
<dbReference type="FunFam" id="3.30.1370.10:FF:000001">
    <property type="entry name" value="Polyribonucleotide nucleotidyltransferase"/>
    <property type="match status" value="1"/>
</dbReference>
<dbReference type="FunFam" id="3.30.230.70:FF:000001">
    <property type="entry name" value="Polyribonucleotide nucleotidyltransferase"/>
    <property type="match status" value="1"/>
</dbReference>
<dbReference type="FunFam" id="3.30.230.70:FF:000002">
    <property type="entry name" value="Polyribonucleotide nucleotidyltransferase"/>
    <property type="match status" value="1"/>
</dbReference>
<dbReference type="Gene3D" id="3.30.230.70">
    <property type="entry name" value="GHMP Kinase, N-terminal domain"/>
    <property type="match status" value="2"/>
</dbReference>
<dbReference type="Gene3D" id="3.30.1370.10">
    <property type="entry name" value="K Homology domain, type 1"/>
    <property type="match status" value="1"/>
</dbReference>
<dbReference type="Gene3D" id="2.40.50.140">
    <property type="entry name" value="Nucleic acid-binding proteins"/>
    <property type="match status" value="1"/>
</dbReference>
<dbReference type="HAMAP" id="MF_01595">
    <property type="entry name" value="PNPase"/>
    <property type="match status" value="1"/>
</dbReference>
<dbReference type="InterPro" id="IPR001247">
    <property type="entry name" value="ExoRNase_PH_dom1"/>
</dbReference>
<dbReference type="InterPro" id="IPR015847">
    <property type="entry name" value="ExoRNase_PH_dom2"/>
</dbReference>
<dbReference type="InterPro" id="IPR036345">
    <property type="entry name" value="ExoRNase_PH_dom2_sf"/>
</dbReference>
<dbReference type="InterPro" id="IPR004087">
    <property type="entry name" value="KH_dom"/>
</dbReference>
<dbReference type="InterPro" id="IPR004088">
    <property type="entry name" value="KH_dom_type_1"/>
</dbReference>
<dbReference type="InterPro" id="IPR036612">
    <property type="entry name" value="KH_dom_type_1_sf"/>
</dbReference>
<dbReference type="InterPro" id="IPR012340">
    <property type="entry name" value="NA-bd_OB-fold"/>
</dbReference>
<dbReference type="InterPro" id="IPR012162">
    <property type="entry name" value="PNPase"/>
</dbReference>
<dbReference type="InterPro" id="IPR027408">
    <property type="entry name" value="PNPase/RNase_PH_dom_sf"/>
</dbReference>
<dbReference type="InterPro" id="IPR015848">
    <property type="entry name" value="PNPase_PH_RNA-bd_bac/org-type"/>
</dbReference>
<dbReference type="InterPro" id="IPR036456">
    <property type="entry name" value="PNPase_PH_RNA-bd_sf"/>
</dbReference>
<dbReference type="InterPro" id="IPR020568">
    <property type="entry name" value="Ribosomal_Su5_D2-typ_SF"/>
</dbReference>
<dbReference type="InterPro" id="IPR003029">
    <property type="entry name" value="S1_domain"/>
</dbReference>
<dbReference type="NCBIfam" id="TIGR03591">
    <property type="entry name" value="polynuc_phos"/>
    <property type="match status" value="1"/>
</dbReference>
<dbReference type="NCBIfam" id="NF008805">
    <property type="entry name" value="PRK11824.1"/>
    <property type="match status" value="1"/>
</dbReference>
<dbReference type="PANTHER" id="PTHR11252">
    <property type="entry name" value="POLYRIBONUCLEOTIDE NUCLEOTIDYLTRANSFERASE"/>
    <property type="match status" value="1"/>
</dbReference>
<dbReference type="PANTHER" id="PTHR11252:SF0">
    <property type="entry name" value="POLYRIBONUCLEOTIDE NUCLEOTIDYLTRANSFERASE 1, MITOCHONDRIAL"/>
    <property type="match status" value="1"/>
</dbReference>
<dbReference type="Pfam" id="PF00013">
    <property type="entry name" value="KH_1"/>
    <property type="match status" value="1"/>
</dbReference>
<dbReference type="Pfam" id="PF03726">
    <property type="entry name" value="PNPase"/>
    <property type="match status" value="1"/>
</dbReference>
<dbReference type="Pfam" id="PF01138">
    <property type="entry name" value="RNase_PH"/>
    <property type="match status" value="2"/>
</dbReference>
<dbReference type="Pfam" id="PF03725">
    <property type="entry name" value="RNase_PH_C"/>
    <property type="match status" value="2"/>
</dbReference>
<dbReference type="Pfam" id="PF00575">
    <property type="entry name" value="S1"/>
    <property type="match status" value="1"/>
</dbReference>
<dbReference type="PIRSF" id="PIRSF005499">
    <property type="entry name" value="PNPase"/>
    <property type="match status" value="1"/>
</dbReference>
<dbReference type="SMART" id="SM00322">
    <property type="entry name" value="KH"/>
    <property type="match status" value="1"/>
</dbReference>
<dbReference type="SMART" id="SM00316">
    <property type="entry name" value="S1"/>
    <property type="match status" value="1"/>
</dbReference>
<dbReference type="SUPFAM" id="SSF54791">
    <property type="entry name" value="Eukaryotic type KH-domain (KH-domain type I)"/>
    <property type="match status" value="1"/>
</dbReference>
<dbReference type="SUPFAM" id="SSF50249">
    <property type="entry name" value="Nucleic acid-binding proteins"/>
    <property type="match status" value="1"/>
</dbReference>
<dbReference type="SUPFAM" id="SSF46915">
    <property type="entry name" value="Polynucleotide phosphorylase/guanosine pentaphosphate synthase (PNPase/GPSI), domain 3"/>
    <property type="match status" value="1"/>
</dbReference>
<dbReference type="SUPFAM" id="SSF55666">
    <property type="entry name" value="Ribonuclease PH domain 2-like"/>
    <property type="match status" value="2"/>
</dbReference>
<dbReference type="SUPFAM" id="SSF54211">
    <property type="entry name" value="Ribosomal protein S5 domain 2-like"/>
    <property type="match status" value="2"/>
</dbReference>
<dbReference type="PROSITE" id="PS50084">
    <property type="entry name" value="KH_TYPE_1"/>
    <property type="match status" value="1"/>
</dbReference>
<dbReference type="PROSITE" id="PS50126">
    <property type="entry name" value="S1"/>
    <property type="match status" value="1"/>
</dbReference>
<comment type="function">
    <text evidence="1">Involved in mRNA degradation. Catalyzes the phosphorolysis of single-stranded polyribonucleotides processively in the 3'- to 5'-direction.</text>
</comment>
<comment type="catalytic activity">
    <reaction evidence="1">
        <text>RNA(n+1) + phosphate = RNA(n) + a ribonucleoside 5'-diphosphate</text>
        <dbReference type="Rhea" id="RHEA:22096"/>
        <dbReference type="Rhea" id="RHEA-COMP:14527"/>
        <dbReference type="Rhea" id="RHEA-COMP:17342"/>
        <dbReference type="ChEBI" id="CHEBI:43474"/>
        <dbReference type="ChEBI" id="CHEBI:57930"/>
        <dbReference type="ChEBI" id="CHEBI:140395"/>
        <dbReference type="EC" id="2.7.7.8"/>
    </reaction>
</comment>
<comment type="cofactor">
    <cofactor evidence="1">
        <name>Mg(2+)</name>
        <dbReference type="ChEBI" id="CHEBI:18420"/>
    </cofactor>
</comment>
<comment type="subcellular location">
    <subcellularLocation>
        <location evidence="1">Cytoplasm</location>
    </subcellularLocation>
</comment>
<comment type="similarity">
    <text evidence="1">Belongs to the polyribonucleotide nucleotidyltransferase family.</text>
</comment>
<organism>
    <name type="scientific">Pelagibacter ubique (strain HTCC1062)</name>
    <dbReference type="NCBI Taxonomy" id="335992"/>
    <lineage>
        <taxon>Bacteria</taxon>
        <taxon>Pseudomonadati</taxon>
        <taxon>Pseudomonadota</taxon>
        <taxon>Alphaproteobacteria</taxon>
        <taxon>Candidatus Pelagibacterales</taxon>
        <taxon>Candidatus Pelagibacteraceae</taxon>
        <taxon>Candidatus Pelagibacter</taxon>
    </lineage>
</organism>
<name>PNP_PELUB</name>
<sequence>MFKVYKKEIEVAGKKISLETGKVARQADGAIIASCGETVILATVVGAKKVNPDMDYFPLSVNYQEKYYAGGKIPGGYFKREARPTESEQLISRLIDRPIRPLFPSEFKNEVQLLPTVISYDKDNQPDILAITASSAALAISGMPFMGPVGASRVGLVDGKYILNPSKAELENSTLDLVVAGTKDAVLMVESETSGLTEEVMLDAVKFGHEGFVPVIEMIEELAKECRKPEWTVEKKDLSEVKKKLEENFTEDLTKAFATIDKQDRSNQISEISDKAKQLFADDENYSDFNVNDELKNLEKKIVRTDILKNKKRIDGRGLADVRAIECEVGVLPRTHGSALFTRGETQAIVVTTLGTSDDEQRLESLDGQHRERFMLHYNFPPFSVGETGRIGTGRREVGHGKLAWRAINSSLPPKEEFPYTFRIVSEITESNGSSSMASVCGASLALMDAGVPIKEPVAGIAMGLIKEGDDFSVLSDILGDEDHLGDMDFKVAGTKDGITSLQMDIKITGITFEIMEQALKQAKEGRIHILGEMNKALSESRADVGEHTPKMEQITVDKKDIAAVIGKGGATIREIVEKSGAKLDVNDEGVVTVAAPDEESRNIAMQMIKDITAKAELNKIYSGKVMKIMEFGAFVNFLGKQDGLVHISELATKRVEKVTDIVKEGDEVKVKVIGFDRGKVKLSMKQAAE</sequence>